<accession>P0DM14</accession>
<proteinExistence type="evidence at protein level"/>
<keyword id="KW-0027">Amidation</keyword>
<keyword id="KW-0903">Direct protein sequencing</keyword>
<keyword id="KW-1015">Disulfide bond</keyword>
<keyword id="KW-0872">Ion channel impairing toxin</keyword>
<keyword id="KW-0960">Knottin</keyword>
<keyword id="KW-0528">Neurotoxin</keyword>
<keyword id="KW-0582">Pharmaceutical</keyword>
<keyword id="KW-0964">Secreted</keyword>
<keyword id="KW-0800">Toxin</keyword>
<keyword id="KW-0738">Voltage-gated sodium channel impairing toxin</keyword>
<protein>
    <recommendedName>
        <fullName evidence="7 8">Mu-theraphotoxin-Pspp1</fullName>
        <shortName evidence="7 8">Mu-TRTX-Pspp1</shortName>
    </recommendedName>
    <alternativeName>
        <fullName evidence="9">Phlotoxin 1</fullName>
        <shortName evidence="9">PhlTx1</shortName>
    </alternativeName>
</protein>
<feature type="chain" id="PRO_0000444153" description="Mu-theraphotoxin-Pspp1" evidence="5">
    <location>
        <begin position="1"/>
        <end position="34"/>
    </location>
</feature>
<feature type="modified residue" description="Phenylalanine amide" evidence="11 12">
    <location>
        <position position="34"/>
    </location>
</feature>
<feature type="disulfide bond" evidence="1">
    <location>
        <begin position="2"/>
        <end position="17"/>
    </location>
</feature>
<feature type="disulfide bond" evidence="1">
    <location>
        <begin position="9"/>
        <end position="22"/>
    </location>
</feature>
<feature type="disulfide bond" evidence="1">
    <location>
        <begin position="16"/>
        <end position="29"/>
    </location>
</feature>
<feature type="mutagenesis site" description="When modified in pyroglutamic acid; weak change in ability to inhibit Nav1.7/SCN9A." evidence="4">
    <original>A</original>
    <variation>Q</variation>
    <location>
        <position position="1"/>
    </location>
</feature>
<feature type="mutagenesis site" description="Moderate increase (about 5-fold) in ability to inhibit Nav1.2/SCN2A, Nav1.5/SCN5A, and Nav1.7/SCN9A, gain of ability to inhibit Nav1.8/SCN10A and important increase in ability to inhibit Cav1.2/CACNA1C (7300-fold). Similar analgesic activity, when tested on the OD1-induced mouse model of Nav1.7/SCN9A-mediated pain." evidence="4">
    <original>D</original>
    <variation>A</variation>
    <location>
        <position position="7"/>
    </location>
</feature>
<feature type="mutagenesis site" description="Weak change in ability to inhibit Nav1.7/SCN9A." evidence="4">
    <original>S</original>
    <variation>A</variation>
    <location>
        <position position="8"/>
    </location>
</feature>
<feature type="mutagenesis site" description="Weak change in ability to inhibit Nav1.7/SCN9A." evidence="4">
    <original>K</original>
    <variation>A</variation>
    <location>
        <position position="12"/>
    </location>
</feature>
<feature type="mutagenesis site" description="Weak change in ability to inhibit Nav1.7/SCN9A." evidence="4">
    <original>K</original>
    <variation>A</variation>
    <location>
        <position position="15"/>
    </location>
</feature>
<feature type="mutagenesis site" description="40-fold decrease in ability to inhibit Nav1.7/SCN9A." evidence="4">
    <original>W</original>
    <variation>A</variation>
    <location>
        <position position="24"/>
    </location>
</feature>
<feature type="mutagenesis site" description="40-fold decrease in ability to inhibit Nav1.7/SCN9A." evidence="4">
    <original>K</original>
    <variation>A</variation>
    <location>
        <position position="25"/>
    </location>
</feature>
<feature type="mutagenesis site" description="40-fold decrease in ability to inhibit Nav1.7/SCN9A." evidence="4">
    <original>Y</original>
    <variation>A</variation>
    <location>
        <position position="26"/>
    </location>
</feature>
<organism>
    <name type="scientific">Phlogiellus sp.</name>
    <name type="common">Tarantula</name>
    <dbReference type="NCBI Taxonomy" id="2211175"/>
    <lineage>
        <taxon>Eukaryota</taxon>
        <taxon>Metazoa</taxon>
        <taxon>Ecdysozoa</taxon>
        <taxon>Arthropoda</taxon>
        <taxon>Chelicerata</taxon>
        <taxon>Arachnida</taxon>
        <taxon>Araneae</taxon>
        <taxon>Mygalomorphae</taxon>
        <taxon>Theraphosidae</taxon>
        <taxon>Phlogiellus</taxon>
    </lineage>
</organism>
<reference key="1">
    <citation type="book" date="2006" name="15th World Congress on Animal, Plant and Microbial Toxins">
        <title>Phlotoxin-1, a toxin from tarantula venom, is a potent modulator of Nav1.7 sodium channels and a potential analgesic.</title>
        <authorList>
            <person name="Escoubas P."/>
            <person name="Bosmans F."/>
            <person name="Cuypers E."/>
            <person name="Diochot S."/>
            <person name="Mebs D."/>
            <person name="Craik D."/>
            <person name="Hill J."/>
            <person name="Maertens C."/>
            <person name="Nakajima T."/>
            <person name="Lazdunski M."/>
            <person name="Tytgat J."/>
        </authorList>
    </citation>
    <scope>PROTEIN SEQUENCE</scope>
    <scope>FUNCTION</scope>
    <scope>SUBCELLULAR LOCATION</scope>
    <scope>SYNTHESIS</scope>
</reference>
<reference key="2">
    <citation type="patent" date="2016-07-27" number="EP3046569">
        <title>Synergistic combination of analgesic drugs.</title>
        <authorList>
            <person name="Wood J.N."/>
        </authorList>
    </citation>
    <scope>PHARMACEUTICAL</scope>
</reference>
<reference key="3">
    <citation type="journal article" date="2017" name="Sci. Rep.">
        <title>Pharmacological characterisation of the highly NaV1.7 selective spider venom peptide Pn3a.</title>
        <authorList>
            <person name="Deuis J.R."/>
            <person name="Dekan Z."/>
            <person name="Wingerd J.S."/>
            <person name="Smith J.J."/>
            <person name="Munasinghe N.R."/>
            <person name="Bhola R.F."/>
            <person name="Imlach W.L."/>
            <person name="Herzig V."/>
            <person name="Armstrong D.A."/>
            <person name="Rosengren K.J."/>
            <person name="Bosmans F."/>
            <person name="Waxman S.G."/>
            <person name="Dib-Hajj S.D."/>
            <person name="Escoubas P."/>
            <person name="Minett M.S."/>
            <person name="Christie M.J."/>
            <person name="King G.F."/>
            <person name="Alewood P.F."/>
            <person name="Lewis R.J."/>
            <person name="Wood J.N."/>
            <person name="Vetter I."/>
        </authorList>
    </citation>
    <scope>HARMACEUTICAL</scope>
</reference>
<reference key="4">
    <citation type="journal article" date="2017" name="Sci. Rep.">
        <title>Corrigendum: Pharmacological characterisation of the highly NaV1.7 selective spider venom peptide Pn3a.</title>
        <authorList>
            <person name="Deuis J.R."/>
            <person name="Dekan Z."/>
            <person name="Wingerd J.S."/>
            <person name="Smith J.J."/>
            <person name="Munasinghe N.R."/>
            <person name="Bhola R.F."/>
            <person name="Imlach W.L."/>
            <person name="Herzig V."/>
            <person name="Armstrong D.A."/>
            <person name="Rosengren K.J."/>
            <person name="Bosmans F."/>
            <person name="Waxman S.G."/>
            <person name="Dib-Hajj S.D."/>
            <person name="Escoubas P."/>
            <person name="Minett M.S."/>
            <person name="Christie M.J."/>
            <person name="King G.F."/>
            <person name="Alewood P.F."/>
            <person name="Lewis R.J."/>
            <person name="Wood J.N."/>
            <person name="Vetter I."/>
        </authorList>
    </citation>
    <scope>ERRATUM OF PUBMED:28106092</scope>
</reference>
<reference key="5">
    <citation type="journal article" date="2019" name="Toxins">
        <title>Chemical synthesis, proper folding, Nav channel selectivity profile and analgesic properties of the spider peptide Phlotoxin 1.</title>
        <authorList>
            <person name="Nicolas S."/>
            <person name="Zoukimian C."/>
            <person name="Bosmans F."/>
            <person name="Montnach J."/>
            <person name="Diochot S."/>
            <person name="Cuypers E."/>
            <person name="De Waard S."/>
            <person name="Beroud R."/>
            <person name="Mebs D."/>
            <person name="Craik D."/>
            <person name="Boturyn D."/>
            <person name="Lazdunski M."/>
            <person name="Tytgat J."/>
            <person name="De Waard M."/>
        </authorList>
    </citation>
    <scope>FUNCTION</scope>
    <scope>SYNTHESIS</scope>
    <scope>AMIDATION AT PHE-34</scope>
</reference>
<reference key="6">
    <citation type="journal article" date="2019" name="Toxins">
        <title>Evaluation of the spider (Phlogiellus genus) Phlotoxin 1 and synthetic variants as antinociceptive drug candidates.</title>
        <authorList>
            <person name="Goncalves T.C."/>
            <person name="Lesport P."/>
            <person name="Kuylle S."/>
            <person name="Stura E."/>
            <person name="Ciolek J."/>
            <person name="Mourier G."/>
            <person name="Servent D."/>
            <person name="Bourinet E."/>
            <person name="Benoit E."/>
            <person name="Gilles N."/>
        </authorList>
    </citation>
    <scope>FUNCTION</scope>
    <scope>SYNTHESIS</scope>
    <scope>MUTAGENESIS OF ALA-1; ASP-7; SER-8; LYS-12; LYS-15; TRP-24; LYS-25 AND TYR-26</scope>
    <scope>3D-STRUCTURE MODELING</scope>
    <scope>AMIDATION AT PHE-34</scope>
</reference>
<name>TXP1_PHLXX</name>
<comment type="function">
    <text evidence="3 4 5">Voltage-gated sodium channel inhibitor. It is unclear if it selectively inhibits Nav1.7/SCN9A or shows similar potency on all sodium channels tested (PubMed:31234412, PubMed:31443554, Ref.1). According to Escoubas et al., 2006 and Nicolas et al., 2019, it is selective over Nav1.7/SCN9A (90% inhibition at 1 uM), versus Nav1.4 and Nav1.6 (35% inhibition), and shows a small inhibition on all other sodium channels (except Nav1.8/SCN10A) (PubMed:31234412, Ref.1). According to Goncalves et al., 2019, it shows a similar inhibition on almost all sodium channels tested (Nav1.1/SCN1A (IC(50)=280.3 nM), Nav1.2/SCN2A (IC(50)=73.7 nM), Nav1.3/SCN3A (IC(50)=201.5 nM), Nav1.4/SCN4A (IC(50)&gt;2100 nM), Nav1.5/SCN5A (IC(50)=710.6 nM), Nav1.6/SCN8A (IC(50)=491.2 nM), and Nav1.7/SCN9A (IC(50)=254.3-260 nM)), except Nav1.8/SCN10A (PubMed:31443554). The voltage-dependence of steady-state Nav1.7/SCN9A channel activation and inactivation are not affected, suggesting that is does not act as a gating-modifier toxin but rather blocks or impedes ion flux through the channel pore (PubMed:31234412, Ref.1). The toxin effect is partial and poorly reversible (PubMed:31234412). In addition to its inhibition to sodium channels, it also shows a small inhibition on rat Kv3.4/KCNC4 potassium channels (20% inhibition at 1 uM) (PubMed:31234412). In vivo, when tested on pain models, it shows analgesic activity (PubMed:31234412, PubMed:31443554).</text>
</comment>
<comment type="subcellular location">
    <subcellularLocation>
        <location evidence="5">Secreted</location>
    </subcellularLocation>
</comment>
<comment type="tissue specificity">
    <text evidence="13">Expressed by the venom gland.</text>
</comment>
<comment type="domain">
    <text evidence="1">The presence of a 'disulfide through disulfide knot' structurally defines this protein as a knottin.</text>
</comment>
<comment type="pharmaceutical">
    <text evidence="2 3 4 6">This toxin may represent a lead for the development of novel analgesic agents. When injected into mice with an opioid analgesic drug and/or an enkephalinase inhibitor, it provides an enhanced and effective therapeutic approach to the treatment and/or prevention of pain (PubMed:28106092, Ref.2). When tested on the OD1-induced mouse model of Nav1.7/SCN9A-mediated pain, it almost completely reverses the induced pain (PubMed:31443554). In addition, it reduces the response of mice in both the acute pain and inflammation phases induced upon formalin injection into the paw (PubMed:31234412).</text>
</comment>
<comment type="miscellaneous">
    <text evidence="11 12">Synthesis and folding of this linear peptide generates 4 peaks. Only the peak 1 shows a strong activity against Nav1.7/SCN9A. When analyzed in details, this peak shows two forms (P1' and P1''), which may be explained by the involvement of at least one Pro residue in a cis-trans isomerization.</text>
</comment>
<comment type="miscellaneous">
    <text evidence="3 4">Negative results: does not show inhibition on mKv1.1/KCNA1, rKv1.2/KCNA2, rKv1.3/KCNA3, rKv1.4/KCNA4, mKv1.5/KCNA5, rKv1.6/KCNA6, rKv2.1, rKv2.2/KCNB2, rKv3.1/KCNC1, rKv3.2/KCNC2, mKv4.1/KCND1, rKv4.2/KCND2, dog Kv4.3/KCND3, KT3.1/KCNK3, rKir1.1/KCNJ1, mKir2.3/KCNJ4 (PubMed:31234412). Shows no or weak activity on Cav1.2/CACNA1C (IC(50)=5.9 uM), Kv11.1/KCNH2/ERG1/HERG (IC(50)&gt;10 uM), and Nav1.8/SCN10A (IC(50)&gt;10 uM) (PubMed:31443554).</text>
</comment>
<comment type="similarity">
    <text evidence="10">Belongs to the neurotoxin 10 (Hwtx-1) family.</text>
</comment>
<evidence type="ECO:0000250" key="1">
    <source>
        <dbReference type="UniProtKB" id="P84507"/>
    </source>
</evidence>
<evidence type="ECO:0000269" key="2">
    <source>
    </source>
</evidence>
<evidence type="ECO:0000269" key="3">
    <source>
    </source>
</evidence>
<evidence type="ECO:0000269" key="4">
    <source>
    </source>
</evidence>
<evidence type="ECO:0000269" key="5">
    <source ref="1"/>
</evidence>
<evidence type="ECO:0000269" key="6">
    <source ref="2"/>
</evidence>
<evidence type="ECO:0000303" key="7">
    <source>
    </source>
</evidence>
<evidence type="ECO:0000303" key="8">
    <source>
    </source>
</evidence>
<evidence type="ECO:0000303" key="9">
    <source ref="1"/>
</evidence>
<evidence type="ECO:0000305" key="10"/>
<evidence type="ECO:0000305" key="11">
    <source>
    </source>
</evidence>
<evidence type="ECO:0000305" key="12">
    <source>
    </source>
</evidence>
<evidence type="ECO:0000305" key="13">
    <source ref="1"/>
</evidence>
<dbReference type="SMR" id="P0DM14"/>
<dbReference type="GO" id="GO:0005576">
    <property type="term" value="C:extracellular region"/>
    <property type="evidence" value="ECO:0007669"/>
    <property type="project" value="UniProtKB-SubCell"/>
</dbReference>
<dbReference type="GO" id="GO:0008200">
    <property type="term" value="F:ion channel inhibitor activity"/>
    <property type="evidence" value="ECO:0007669"/>
    <property type="project" value="InterPro"/>
</dbReference>
<dbReference type="GO" id="GO:0017080">
    <property type="term" value="F:sodium channel regulator activity"/>
    <property type="evidence" value="ECO:0007669"/>
    <property type="project" value="UniProtKB-KW"/>
</dbReference>
<dbReference type="GO" id="GO:0090729">
    <property type="term" value="F:toxin activity"/>
    <property type="evidence" value="ECO:0007669"/>
    <property type="project" value="UniProtKB-KW"/>
</dbReference>
<dbReference type="InterPro" id="IPR011696">
    <property type="entry name" value="Huwentoxin-1"/>
</dbReference>
<dbReference type="Pfam" id="PF07740">
    <property type="entry name" value="Toxin_12"/>
    <property type="match status" value="1"/>
</dbReference>
<dbReference type="SUPFAM" id="SSF57059">
    <property type="entry name" value="omega toxin-like"/>
    <property type="match status" value="1"/>
</dbReference>
<sequence>ACLGQWDSCDPKASKCCPNYACEWKYPWCRYKLF</sequence>